<keyword id="KW-0963">Cytoplasm</keyword>
<keyword id="KW-0489">Methyltransferase</keyword>
<keyword id="KW-0949">S-adenosyl-L-methionine</keyword>
<keyword id="KW-0808">Transferase</keyword>
<keyword id="KW-0819">tRNA processing</keyword>
<organism>
    <name type="scientific">Coxiella burnetii (strain CbuK_Q154)</name>
    <name type="common">Coxiella burnetii (strain Q154)</name>
    <dbReference type="NCBI Taxonomy" id="434924"/>
    <lineage>
        <taxon>Bacteria</taxon>
        <taxon>Pseudomonadati</taxon>
        <taxon>Pseudomonadota</taxon>
        <taxon>Gammaproteobacteria</taxon>
        <taxon>Legionellales</taxon>
        <taxon>Coxiellaceae</taxon>
        <taxon>Coxiella</taxon>
    </lineage>
</organism>
<gene>
    <name evidence="1" type="primary">trmD</name>
    <name type="ordered locus">CbuK_1415</name>
</gene>
<name>TRMD_COXB1</name>
<reference key="1">
    <citation type="journal article" date="2009" name="Infect. Immun.">
        <title>Comparative genomics reveal extensive transposon-mediated genomic plasticity and diversity among potential effector proteins within the genus Coxiella.</title>
        <authorList>
            <person name="Beare P.A."/>
            <person name="Unsworth N."/>
            <person name="Andoh M."/>
            <person name="Voth D.E."/>
            <person name="Omsland A."/>
            <person name="Gilk S.D."/>
            <person name="Williams K.P."/>
            <person name="Sobral B.W."/>
            <person name="Kupko J.J. III"/>
            <person name="Porcella S.F."/>
            <person name="Samuel J.E."/>
            <person name="Heinzen R.A."/>
        </authorList>
    </citation>
    <scope>NUCLEOTIDE SEQUENCE [LARGE SCALE GENOMIC DNA]</scope>
    <source>
        <strain>CbuK_Q154</strain>
    </source>
</reference>
<accession>B6J8J0</accession>
<proteinExistence type="inferred from homology"/>
<feature type="chain" id="PRO_1000130155" description="tRNA (guanine-N(1)-)-methyltransferase">
    <location>
        <begin position="1"/>
        <end position="246"/>
    </location>
</feature>
<feature type="binding site" evidence="1">
    <location>
        <position position="114"/>
    </location>
    <ligand>
        <name>S-adenosyl-L-methionine</name>
        <dbReference type="ChEBI" id="CHEBI:59789"/>
    </ligand>
</feature>
<feature type="binding site" evidence="1">
    <location>
        <begin position="134"/>
        <end position="139"/>
    </location>
    <ligand>
        <name>S-adenosyl-L-methionine</name>
        <dbReference type="ChEBI" id="CHEBI:59789"/>
    </ligand>
</feature>
<evidence type="ECO:0000255" key="1">
    <source>
        <dbReference type="HAMAP-Rule" id="MF_00605"/>
    </source>
</evidence>
<sequence length="246" mass="27655">MKLIIGVITLFPQMFDALKSGVIGRALKQDRLTLSFWNPRDYATDPHRTVDDRPYGGGPGMVMKFEPLALALKAAKAQLGENTKVIHLTPQGKLLTQAIVREKIHASPLILLAGRYEGIDERLIEAEVDEEWSIGDYILSGGELPAMVLIDAMTRLLPGVLGHKDSASQDSFTAGLLDYPHYTRPEKIADRPVPSVLLSGDHEAISRWRLKQSLGRTWQRRQDLIKRRSLSENEQRLLDEFFEESS</sequence>
<comment type="function">
    <text evidence="1">Specifically methylates guanosine-37 in various tRNAs.</text>
</comment>
<comment type="catalytic activity">
    <reaction evidence="1">
        <text>guanosine(37) in tRNA + S-adenosyl-L-methionine = N(1)-methylguanosine(37) in tRNA + S-adenosyl-L-homocysteine + H(+)</text>
        <dbReference type="Rhea" id="RHEA:36899"/>
        <dbReference type="Rhea" id="RHEA-COMP:10145"/>
        <dbReference type="Rhea" id="RHEA-COMP:10147"/>
        <dbReference type="ChEBI" id="CHEBI:15378"/>
        <dbReference type="ChEBI" id="CHEBI:57856"/>
        <dbReference type="ChEBI" id="CHEBI:59789"/>
        <dbReference type="ChEBI" id="CHEBI:73542"/>
        <dbReference type="ChEBI" id="CHEBI:74269"/>
        <dbReference type="EC" id="2.1.1.228"/>
    </reaction>
</comment>
<comment type="subunit">
    <text evidence="1">Homodimer.</text>
</comment>
<comment type="subcellular location">
    <subcellularLocation>
        <location evidence="1">Cytoplasm</location>
    </subcellularLocation>
</comment>
<comment type="similarity">
    <text evidence="1">Belongs to the RNA methyltransferase TrmD family.</text>
</comment>
<dbReference type="EC" id="2.1.1.228" evidence="1"/>
<dbReference type="EMBL" id="CP001020">
    <property type="protein sequence ID" value="ACJ20589.1"/>
    <property type="molecule type" value="Genomic_DNA"/>
</dbReference>
<dbReference type="RefSeq" id="WP_005771381.1">
    <property type="nucleotide sequence ID" value="NC_011528.1"/>
</dbReference>
<dbReference type="SMR" id="B6J8J0"/>
<dbReference type="KEGG" id="cbc:CbuK_1415"/>
<dbReference type="HOGENOM" id="CLU_047363_0_1_6"/>
<dbReference type="GO" id="GO:0005829">
    <property type="term" value="C:cytosol"/>
    <property type="evidence" value="ECO:0007669"/>
    <property type="project" value="TreeGrafter"/>
</dbReference>
<dbReference type="GO" id="GO:0052906">
    <property type="term" value="F:tRNA (guanine(37)-N1)-methyltransferase activity"/>
    <property type="evidence" value="ECO:0007669"/>
    <property type="project" value="UniProtKB-UniRule"/>
</dbReference>
<dbReference type="GO" id="GO:0002939">
    <property type="term" value="P:tRNA N1-guanine methylation"/>
    <property type="evidence" value="ECO:0007669"/>
    <property type="project" value="TreeGrafter"/>
</dbReference>
<dbReference type="CDD" id="cd18080">
    <property type="entry name" value="TrmD-like"/>
    <property type="match status" value="1"/>
</dbReference>
<dbReference type="FunFam" id="1.10.1270.20:FF:000001">
    <property type="entry name" value="tRNA (guanine-N(1)-)-methyltransferase"/>
    <property type="match status" value="1"/>
</dbReference>
<dbReference type="FunFam" id="3.40.1280.10:FF:000001">
    <property type="entry name" value="tRNA (guanine-N(1)-)-methyltransferase"/>
    <property type="match status" value="1"/>
</dbReference>
<dbReference type="Gene3D" id="3.40.1280.10">
    <property type="match status" value="1"/>
</dbReference>
<dbReference type="Gene3D" id="1.10.1270.20">
    <property type="entry name" value="tRNA(m1g37)methyltransferase, domain 2"/>
    <property type="match status" value="1"/>
</dbReference>
<dbReference type="HAMAP" id="MF_00605">
    <property type="entry name" value="TrmD"/>
    <property type="match status" value="1"/>
</dbReference>
<dbReference type="InterPro" id="IPR029028">
    <property type="entry name" value="Alpha/beta_knot_MTases"/>
</dbReference>
<dbReference type="InterPro" id="IPR023148">
    <property type="entry name" value="tRNA_m1G_MeTrfase_C_sf"/>
</dbReference>
<dbReference type="InterPro" id="IPR002649">
    <property type="entry name" value="tRNA_m1G_MeTrfase_TrmD"/>
</dbReference>
<dbReference type="InterPro" id="IPR029026">
    <property type="entry name" value="tRNA_m1G_MTases_N"/>
</dbReference>
<dbReference type="InterPro" id="IPR016009">
    <property type="entry name" value="tRNA_MeTrfase_TRMD/TRM10"/>
</dbReference>
<dbReference type="NCBIfam" id="NF000648">
    <property type="entry name" value="PRK00026.1"/>
    <property type="match status" value="1"/>
</dbReference>
<dbReference type="NCBIfam" id="TIGR00088">
    <property type="entry name" value="trmD"/>
    <property type="match status" value="1"/>
</dbReference>
<dbReference type="PANTHER" id="PTHR46417">
    <property type="entry name" value="TRNA (GUANINE-N(1)-)-METHYLTRANSFERASE"/>
    <property type="match status" value="1"/>
</dbReference>
<dbReference type="PANTHER" id="PTHR46417:SF1">
    <property type="entry name" value="TRNA (GUANINE-N(1)-)-METHYLTRANSFERASE"/>
    <property type="match status" value="1"/>
</dbReference>
<dbReference type="Pfam" id="PF01746">
    <property type="entry name" value="tRNA_m1G_MT"/>
    <property type="match status" value="1"/>
</dbReference>
<dbReference type="PIRSF" id="PIRSF000386">
    <property type="entry name" value="tRNA_mtase"/>
    <property type="match status" value="1"/>
</dbReference>
<dbReference type="SUPFAM" id="SSF75217">
    <property type="entry name" value="alpha/beta knot"/>
    <property type="match status" value="1"/>
</dbReference>
<protein>
    <recommendedName>
        <fullName evidence="1">tRNA (guanine-N(1)-)-methyltransferase</fullName>
        <ecNumber evidence="1">2.1.1.228</ecNumber>
    </recommendedName>
    <alternativeName>
        <fullName evidence="1">M1G-methyltransferase</fullName>
    </alternativeName>
    <alternativeName>
        <fullName evidence="1">tRNA [GM37] methyltransferase</fullName>
    </alternativeName>
</protein>